<feature type="chain" id="PRO_0000440804" description="Hemagglutinin HA1 chain" evidence="1">
    <location>
        <begin position="1"/>
        <end position="335"/>
    </location>
</feature>
<feature type="chain" id="PRO_0000440805" description="Hemagglutinin HA2 chain" evidence="1">
    <location>
        <begin position="336"/>
        <end position="548"/>
    </location>
</feature>
<feature type="topological domain" description="Extracellular" evidence="1">
    <location>
        <begin position="1"/>
        <end position="520"/>
    </location>
</feature>
<feature type="transmembrane region" description="Helical" evidence="1">
    <location>
        <begin position="521"/>
        <end position="541"/>
    </location>
</feature>
<feature type="topological domain" description="Cytoplasmic" evidence="1">
    <location>
        <begin position="542"/>
        <end position="548"/>
    </location>
</feature>
<feature type="site" description="Cleavage; by host" evidence="1">
    <location>
        <begin position="335"/>
        <end position="336"/>
    </location>
</feature>
<feature type="lipid moiety-binding region" description="S-palmitoyl cysteine; by host" evidence="1">
    <location>
        <position position="546"/>
    </location>
</feature>
<feature type="glycosylation site" description="N-linked (GlcNAc...) asparagine; by host" evidence="1">
    <location>
        <position position="15"/>
    </location>
</feature>
<feature type="glycosylation site" description="N-linked (GlcNAc...) asparagine; by host" evidence="1">
    <location>
        <position position="16"/>
    </location>
</feature>
<feature type="glycosylation site" description="N-linked (GlcNAc...) asparagine; by host" evidence="1">
    <location>
        <position position="28"/>
    </location>
</feature>
<feature type="glycosylation site" description="N-linked (GlcNAc...) asparagine; by host" evidence="1">
    <location>
        <position position="170"/>
    </location>
</feature>
<feature type="glycosylation site" description="N-linked (GlcNAc...) asparagine; by host" evidence="1">
    <location>
        <position position="291"/>
    </location>
</feature>
<feature type="glycosylation site" description="N-linked (GlcNAc...) asparagine; by host" evidence="1">
    <location>
        <position position="489"/>
    </location>
</feature>
<feature type="disulfide bond" description="Interchain (between HA1 and HA2 chains)" evidence="1">
    <location>
        <begin position="9"/>
        <end position="472"/>
    </location>
</feature>
<feature type="disulfide bond" evidence="1">
    <location>
        <begin position="47"/>
        <end position="279"/>
    </location>
</feature>
<feature type="disulfide bond" evidence="1">
    <location>
        <begin position="60"/>
        <end position="72"/>
    </location>
</feature>
<feature type="disulfide bond" evidence="1">
    <location>
        <begin position="95"/>
        <end position="140"/>
    </location>
</feature>
<feature type="disulfide bond" evidence="1">
    <location>
        <begin position="283"/>
        <end position="307"/>
    </location>
</feature>
<feature type="disulfide bond" evidence="1">
    <location>
        <begin position="479"/>
        <end position="483"/>
    </location>
</feature>
<feature type="non-terminal residue">
    <location>
        <position position="1"/>
    </location>
</feature>
<feature type="non-terminal residue">
    <location>
        <position position="548"/>
    </location>
</feature>
<protein>
    <recommendedName>
        <fullName evidence="1">Hemagglutinin</fullName>
    </recommendedName>
    <component>
        <recommendedName>
            <fullName evidence="1">Hemagglutinin HA1 chain</fullName>
        </recommendedName>
    </component>
    <component>
        <recommendedName>
            <fullName evidence="1">Hemagglutinin HA2 chain</fullName>
        </recommendedName>
    </component>
</protein>
<gene>
    <name evidence="1" type="primary">HA</name>
</gene>
<dbReference type="EMBL" id="AF509019">
    <property type="protein sequence ID" value="AAO52862.1"/>
    <property type="molecule type" value="Genomic_DNA"/>
</dbReference>
<dbReference type="SMR" id="Q80A28"/>
<dbReference type="GlyCosmos" id="Q80A28">
    <property type="glycosylation" value="6 sites, No reported glycans"/>
</dbReference>
<dbReference type="GO" id="GO:0020002">
    <property type="term" value="C:host cell plasma membrane"/>
    <property type="evidence" value="ECO:0007669"/>
    <property type="project" value="UniProtKB-SubCell"/>
</dbReference>
<dbReference type="GO" id="GO:0016020">
    <property type="term" value="C:membrane"/>
    <property type="evidence" value="ECO:0007669"/>
    <property type="project" value="UniProtKB-KW"/>
</dbReference>
<dbReference type="GO" id="GO:0019031">
    <property type="term" value="C:viral envelope"/>
    <property type="evidence" value="ECO:0007669"/>
    <property type="project" value="UniProtKB-KW"/>
</dbReference>
<dbReference type="GO" id="GO:0055036">
    <property type="term" value="C:virion membrane"/>
    <property type="evidence" value="ECO:0007669"/>
    <property type="project" value="UniProtKB-SubCell"/>
</dbReference>
<dbReference type="GO" id="GO:0046789">
    <property type="term" value="F:host cell surface receptor binding"/>
    <property type="evidence" value="ECO:0007669"/>
    <property type="project" value="InterPro"/>
</dbReference>
<dbReference type="GO" id="GO:0075512">
    <property type="term" value="P:clathrin-dependent endocytosis of virus by host cell"/>
    <property type="evidence" value="ECO:0007669"/>
    <property type="project" value="UniProtKB-KW"/>
</dbReference>
<dbReference type="GO" id="GO:0039654">
    <property type="term" value="P:fusion of virus membrane with host endosome membrane"/>
    <property type="evidence" value="ECO:0007669"/>
    <property type="project" value="UniProtKB-KW"/>
</dbReference>
<dbReference type="GO" id="GO:0019064">
    <property type="term" value="P:fusion of virus membrane with host plasma membrane"/>
    <property type="evidence" value="ECO:0007669"/>
    <property type="project" value="InterPro"/>
</dbReference>
<dbReference type="GO" id="GO:0019062">
    <property type="term" value="P:virion attachment to host cell"/>
    <property type="evidence" value="ECO:0007669"/>
    <property type="project" value="UniProtKB-KW"/>
</dbReference>
<dbReference type="FunFam" id="3.90.209.20:FF:000001">
    <property type="entry name" value="Hemagglutinin"/>
    <property type="match status" value="1"/>
</dbReference>
<dbReference type="Gene3D" id="3.90.20.10">
    <property type="match status" value="1"/>
</dbReference>
<dbReference type="Gene3D" id="3.90.209.20">
    <property type="match status" value="1"/>
</dbReference>
<dbReference type="Gene3D" id="2.10.77.10">
    <property type="entry name" value="Hemagglutinin Chain A, Domain 2"/>
    <property type="match status" value="1"/>
</dbReference>
<dbReference type="HAMAP" id="MF_04072">
    <property type="entry name" value="INFV_HEMA"/>
    <property type="match status" value="1"/>
</dbReference>
<dbReference type="InterPro" id="IPR008980">
    <property type="entry name" value="Capsid_hemagglutn"/>
</dbReference>
<dbReference type="InterPro" id="IPR013828">
    <property type="entry name" value="Hemagglutn_HA1_a/b_dom_sf"/>
</dbReference>
<dbReference type="InterPro" id="IPR000149">
    <property type="entry name" value="Hemagglutn_influenz_A"/>
</dbReference>
<dbReference type="InterPro" id="IPR001364">
    <property type="entry name" value="Hemagglutn_influenz_A/B"/>
</dbReference>
<dbReference type="Pfam" id="PF00509">
    <property type="entry name" value="Hemagglutinin"/>
    <property type="match status" value="1"/>
</dbReference>
<dbReference type="PRINTS" id="PR00330">
    <property type="entry name" value="HEMAGGLUTN1"/>
</dbReference>
<dbReference type="PRINTS" id="PR00329">
    <property type="entry name" value="HEMAGGLUTN12"/>
</dbReference>
<dbReference type="SUPFAM" id="SSF58064">
    <property type="entry name" value="Influenza hemagglutinin (stalk)"/>
    <property type="match status" value="1"/>
</dbReference>
<dbReference type="SUPFAM" id="SSF49818">
    <property type="entry name" value="Viral protein domain"/>
    <property type="match status" value="1"/>
</dbReference>
<proteinExistence type="inferred from homology"/>
<evidence type="ECO:0000255" key="1">
    <source>
        <dbReference type="HAMAP-Rule" id="MF_04072"/>
    </source>
</evidence>
<accession>Q80A28</accession>
<organism>
    <name type="scientific">Influenza A virus (strain A/Chicken/Hong Kong/FY150/2001 H5N1 genotype D)</name>
    <dbReference type="NCBI Taxonomy" id="222142"/>
    <lineage>
        <taxon>Viruses</taxon>
        <taxon>Riboviria</taxon>
        <taxon>Orthornavirae</taxon>
        <taxon>Negarnaviricota</taxon>
        <taxon>Polyploviricotina</taxon>
        <taxon>Insthoviricetes</taxon>
        <taxon>Articulavirales</taxon>
        <taxon>Orthomyxoviridae</taxon>
        <taxon>Alphainfluenzavirus</taxon>
        <taxon>Alphainfluenzavirus influenzae</taxon>
        <taxon>Influenza A virus</taxon>
    </lineage>
</organism>
<sequence length="548" mass="61979">SLVKSDQICIGYHANNSTEQVDTIMEKNVTVTHAQDILEKTHNGKLCDLDGVKPLILRDCSVAGWLLGNPMCDEFINVPEWSYIVEKASPANDLCYPGDFNDYEELKHLLSRINHFEKIQIIPKSSWSNHEASSGVSSACPYLGKSSFFRNVVWLIKKNNAYPTIKRSYNNTNQEDLLVLWGIHHPNDAAEQTKLYQNPTTYISVGTSTLNQRLVPKIATRSKVNGQSGRMEFFWTILKPNDAINFESNGNFIAPEYAYKIVKKGDSAIMKSELEYGNCNTKCQTPMGAINSSMPFHNIHPLTIGECPKYVKSNRLVLTTGLRNTPQRERRRKKRGLFGAIAGFIEGGWQGMVDGWYGYHHSNEQGSGYAADKESTQKAIDGVTNKVNSIIDKMNTQFEAVGREFNNLERRIENLNKKMEDGFLDVWTYNAELLVLMENERTLDFHDSNVKNLYDKVRLQLRDNAKELGNGCFEFYHKCDNECMESVKNGTYDYPQYSQKAGLNREEISGVKLESMGTYQILSIYSTVASSLALAIMVAGLSLWMCSN</sequence>
<organismHost>
    <name type="scientific">Aves</name>
    <dbReference type="NCBI Taxonomy" id="8782"/>
</organismHost>
<organismHost>
    <name type="scientific">Felis catus</name>
    <name type="common">Cat</name>
    <name type="synonym">Felis silvestris catus</name>
    <dbReference type="NCBI Taxonomy" id="9685"/>
</organismHost>
<organismHost>
    <name type="scientific">Homo sapiens</name>
    <name type="common">Human</name>
    <dbReference type="NCBI Taxonomy" id="9606"/>
</organismHost>
<organismHost>
    <name type="scientific">Panthera pardus</name>
    <name type="common">Leopard</name>
    <name type="synonym">Felis pardus</name>
    <dbReference type="NCBI Taxonomy" id="9691"/>
</organismHost>
<organismHost>
    <name type="scientific">Panthera tigris</name>
    <name type="common">Tiger</name>
    <dbReference type="NCBI Taxonomy" id="9694"/>
</organismHost>
<organismHost>
    <name type="scientific">Sus scrofa</name>
    <name type="common">Pig</name>
    <dbReference type="NCBI Taxonomy" id="9823"/>
</organismHost>
<keyword id="KW-1167">Clathrin- and caveolin-independent endocytosis of virus by host</keyword>
<keyword id="KW-1165">Clathrin-mediated endocytosis of virus by host</keyword>
<keyword id="KW-1015">Disulfide bond</keyword>
<keyword id="KW-1170">Fusion of virus membrane with host endosomal membrane</keyword>
<keyword id="KW-1168">Fusion of virus membrane with host membrane</keyword>
<keyword id="KW-0325">Glycoprotein</keyword>
<keyword id="KW-0348">Hemagglutinin</keyword>
<keyword id="KW-1032">Host cell membrane</keyword>
<keyword id="KW-1043">Host membrane</keyword>
<keyword id="KW-0945">Host-virus interaction</keyword>
<keyword id="KW-0449">Lipoprotein</keyword>
<keyword id="KW-0472">Membrane</keyword>
<keyword id="KW-0564">Palmitate</keyword>
<keyword id="KW-0812">Transmembrane</keyword>
<keyword id="KW-1133">Transmembrane helix</keyword>
<keyword id="KW-1161">Viral attachment to host cell</keyword>
<keyword id="KW-0261">Viral envelope protein</keyword>
<keyword id="KW-1162">Viral penetration into host cytoplasm</keyword>
<keyword id="KW-0946">Virion</keyword>
<keyword id="KW-1164">Virus endocytosis by host</keyword>
<keyword id="KW-1160">Virus entry into host cell</keyword>
<reference key="1">
    <citation type="journal article" date="2002" name="Proc. Natl. Acad. Sci. U.S.A.">
        <title>Emergence of multiple genotypes of H5N1 avian influenza viruses in Hong Kong SAR.</title>
        <authorList>
            <person name="Guan Y."/>
            <person name="Peiris J.S.M."/>
            <person name="Lipatov A.S."/>
            <person name="Ellis T.M."/>
            <person name="Dyrting K.C."/>
            <person name="Krauss S."/>
            <person name="Zhang L.J."/>
            <person name="Webster R.G."/>
            <person name="Shortridge K.F."/>
        </authorList>
    </citation>
    <scope>NUCLEOTIDE SEQUENCE [GENOMIC RNA]</scope>
</reference>
<comment type="function">
    <text evidence="1">Binds to sialic acid-containing receptors on the cell surface, bringing about the attachment of the virus particle to the cell. This attachment induces virion internalization either through clathrin-dependent endocytosis or through clathrin- and caveolin-independent pathway. Plays a major role in the determination of host range restriction and virulence. Class I viral fusion protein. Responsible for penetration of the virus into the cell cytoplasm by mediating the fusion of the membrane of the endocytosed virus particle with the endosomal membrane. Low pH in endosomes induces an irreversible conformational change in HA2, releasing the fusion hydrophobic peptide. Several trimers are required to form a competent fusion pore.</text>
</comment>
<comment type="subunit">
    <text evidence="1">Homotrimer of disulfide-linked HA1-HA2.</text>
</comment>
<comment type="subcellular location">
    <subcellularLocation>
        <location evidence="1">Virion membrane</location>
        <topology evidence="1">Single-pass type I membrane protein</topology>
    </subcellularLocation>
    <subcellularLocation>
        <location evidence="1">Host apical cell membrane</location>
        <topology evidence="1">Single-pass type I membrane protein</topology>
    </subcellularLocation>
    <text evidence="1">Targeted to the apical plasma membrane in epithelial polarized cells through a signal present in the transmembrane domain. Associated with glycosphingolipid- and cholesterol-enriched detergent-resistant lipid rafts.</text>
</comment>
<comment type="PTM">
    <text evidence="1">Palmitoylated.</text>
</comment>
<comment type="PTM">
    <text evidence="1">In natural infection, inactive HA is matured into HA1 and HA2 outside the cell by one or more trypsin-like, arginine-specific endoprotease secreted by the bronchial epithelial cells. One identified protease that may be involved in this process is secreted in lungs by club cells.</text>
</comment>
<comment type="miscellaneous">
    <text>Major glycoprotein, comprises over 80% of the envelope proteins present in virus particle.</text>
</comment>
<comment type="miscellaneous">
    <text>The extent of infection into host organism is determined by HA. Influenza viruses bud from the apical surface of polarized epithelial cells (e.g. bronchial epithelial cells) into lumen of lungs and are therefore usually pneumotropic. The reason is that HA is cleaved by tryptase clara which is restricted to lungs. However, HAs of H5 and H7 pantropic avian viruses subtypes can be cleaved by furin and subtilisin-type enzymes, allowing the virus to grow in other organs than lungs.</text>
</comment>
<comment type="miscellaneous">
    <text>The influenza A genome consist of 8 RNA segments. Genetic variation of hemagglutinin and/or neuraminidase genes results in the emergence of new influenza strains. The mechanism of variation can be the result of point mutations or the result of genetic reassortment between segments of two different strains.</text>
</comment>
<comment type="similarity">
    <text evidence="1">Belongs to the influenza viruses hemagglutinin family.</text>
</comment>
<name>HEMA_I01A2</name>